<keyword id="KW-0030">Aminoacyl-tRNA synthetase</keyword>
<keyword id="KW-0067">ATP-binding</keyword>
<keyword id="KW-0963">Cytoplasm</keyword>
<keyword id="KW-0436">Ligase</keyword>
<keyword id="KW-0547">Nucleotide-binding</keyword>
<keyword id="KW-0648">Protein biosynthesis</keyword>
<evidence type="ECO:0000255" key="1">
    <source>
        <dbReference type="HAMAP-Rule" id="MF_00044"/>
    </source>
</evidence>
<name>SYDND_RHOPA</name>
<gene>
    <name evidence="1" type="primary">aspS</name>
    <name type="ordered locus">RPA3043</name>
</gene>
<organism>
    <name type="scientific">Rhodopseudomonas palustris (strain ATCC BAA-98 / CGA009)</name>
    <dbReference type="NCBI Taxonomy" id="258594"/>
    <lineage>
        <taxon>Bacteria</taxon>
        <taxon>Pseudomonadati</taxon>
        <taxon>Pseudomonadota</taxon>
        <taxon>Alphaproteobacteria</taxon>
        <taxon>Hyphomicrobiales</taxon>
        <taxon>Nitrobacteraceae</taxon>
        <taxon>Rhodopseudomonas</taxon>
    </lineage>
</organism>
<comment type="function">
    <text evidence="1">Aspartyl-tRNA synthetase with relaxed tRNA specificity since it is able to aspartylate not only its cognate tRNA(Asp) but also tRNA(Asn). Reaction proceeds in two steps: L-aspartate is first activated by ATP to form Asp-AMP and then transferred to the acceptor end of tRNA(Asp/Asn).</text>
</comment>
<comment type="catalytic activity">
    <reaction evidence="1">
        <text>tRNA(Asx) + L-aspartate + ATP = L-aspartyl-tRNA(Asx) + AMP + diphosphate</text>
        <dbReference type="Rhea" id="RHEA:18349"/>
        <dbReference type="Rhea" id="RHEA-COMP:9710"/>
        <dbReference type="Rhea" id="RHEA-COMP:9711"/>
        <dbReference type="ChEBI" id="CHEBI:29991"/>
        <dbReference type="ChEBI" id="CHEBI:30616"/>
        <dbReference type="ChEBI" id="CHEBI:33019"/>
        <dbReference type="ChEBI" id="CHEBI:78442"/>
        <dbReference type="ChEBI" id="CHEBI:78516"/>
        <dbReference type="ChEBI" id="CHEBI:456215"/>
        <dbReference type="EC" id="6.1.1.23"/>
    </reaction>
</comment>
<comment type="subunit">
    <text evidence="1">Homodimer.</text>
</comment>
<comment type="subcellular location">
    <subcellularLocation>
        <location evidence="1">Cytoplasm</location>
    </subcellularLocation>
</comment>
<comment type="similarity">
    <text evidence="1">Belongs to the class-II aminoacyl-tRNA synthetase family. Type 1 subfamily.</text>
</comment>
<proteinExistence type="inferred from homology"/>
<reference key="1">
    <citation type="journal article" date="2004" name="Nat. Biotechnol.">
        <title>Complete genome sequence of the metabolically versatile photosynthetic bacterium Rhodopseudomonas palustris.</title>
        <authorList>
            <person name="Larimer F.W."/>
            <person name="Chain P."/>
            <person name="Hauser L."/>
            <person name="Lamerdin J.E."/>
            <person name="Malfatti S."/>
            <person name="Do L."/>
            <person name="Land M.L."/>
            <person name="Pelletier D.A."/>
            <person name="Beatty J.T."/>
            <person name="Lang A.S."/>
            <person name="Tabita F.R."/>
            <person name="Gibson J.L."/>
            <person name="Hanson T.E."/>
            <person name="Bobst C."/>
            <person name="Torres y Torres J.L."/>
            <person name="Peres C."/>
            <person name="Harrison F.H."/>
            <person name="Gibson J."/>
            <person name="Harwood C.S."/>
        </authorList>
    </citation>
    <scope>NUCLEOTIDE SEQUENCE [LARGE SCALE GENOMIC DNA]</scope>
    <source>
        <strain>ATCC BAA-98 / CGA009</strain>
    </source>
</reference>
<dbReference type="EC" id="6.1.1.23" evidence="1"/>
<dbReference type="EMBL" id="BX572602">
    <property type="protein sequence ID" value="CAE28484.1"/>
    <property type="molecule type" value="Genomic_DNA"/>
</dbReference>
<dbReference type="RefSeq" id="WP_011158589.1">
    <property type="nucleotide sequence ID" value="NZ_CP116810.1"/>
</dbReference>
<dbReference type="SMR" id="Q6N5D6"/>
<dbReference type="STRING" id="258594.RPA3043"/>
<dbReference type="GeneID" id="66894125"/>
<dbReference type="eggNOG" id="COG0173">
    <property type="taxonomic scope" value="Bacteria"/>
</dbReference>
<dbReference type="HOGENOM" id="CLU_014330_3_2_5"/>
<dbReference type="PhylomeDB" id="Q6N5D6"/>
<dbReference type="GO" id="GO:0005737">
    <property type="term" value="C:cytoplasm"/>
    <property type="evidence" value="ECO:0007669"/>
    <property type="project" value="UniProtKB-SubCell"/>
</dbReference>
<dbReference type="GO" id="GO:0004815">
    <property type="term" value="F:aspartate-tRNA ligase activity"/>
    <property type="evidence" value="ECO:0007669"/>
    <property type="project" value="UniProtKB-UniRule"/>
</dbReference>
<dbReference type="GO" id="GO:0050560">
    <property type="term" value="F:aspartate-tRNA(Asn) ligase activity"/>
    <property type="evidence" value="ECO:0007669"/>
    <property type="project" value="UniProtKB-EC"/>
</dbReference>
<dbReference type="GO" id="GO:0005524">
    <property type="term" value="F:ATP binding"/>
    <property type="evidence" value="ECO:0007669"/>
    <property type="project" value="UniProtKB-UniRule"/>
</dbReference>
<dbReference type="GO" id="GO:0003676">
    <property type="term" value="F:nucleic acid binding"/>
    <property type="evidence" value="ECO:0007669"/>
    <property type="project" value="InterPro"/>
</dbReference>
<dbReference type="GO" id="GO:0006422">
    <property type="term" value="P:aspartyl-tRNA aminoacylation"/>
    <property type="evidence" value="ECO:0007669"/>
    <property type="project" value="UniProtKB-UniRule"/>
</dbReference>
<dbReference type="CDD" id="cd00777">
    <property type="entry name" value="AspRS_core"/>
    <property type="match status" value="1"/>
</dbReference>
<dbReference type="CDD" id="cd04317">
    <property type="entry name" value="EcAspRS_like_N"/>
    <property type="match status" value="1"/>
</dbReference>
<dbReference type="Gene3D" id="3.30.930.10">
    <property type="entry name" value="Bira Bifunctional Protein, Domain 2"/>
    <property type="match status" value="1"/>
</dbReference>
<dbReference type="Gene3D" id="3.30.1360.30">
    <property type="entry name" value="GAD-like domain"/>
    <property type="match status" value="1"/>
</dbReference>
<dbReference type="Gene3D" id="2.40.50.140">
    <property type="entry name" value="Nucleic acid-binding proteins"/>
    <property type="match status" value="1"/>
</dbReference>
<dbReference type="HAMAP" id="MF_00044">
    <property type="entry name" value="Asp_tRNA_synth_type1"/>
    <property type="match status" value="1"/>
</dbReference>
<dbReference type="InterPro" id="IPR004364">
    <property type="entry name" value="Aa-tRNA-synt_II"/>
</dbReference>
<dbReference type="InterPro" id="IPR006195">
    <property type="entry name" value="aa-tRNA-synth_II"/>
</dbReference>
<dbReference type="InterPro" id="IPR045864">
    <property type="entry name" value="aa-tRNA-synth_II/BPL/LPL"/>
</dbReference>
<dbReference type="InterPro" id="IPR004524">
    <property type="entry name" value="Asp-tRNA-ligase_1"/>
</dbReference>
<dbReference type="InterPro" id="IPR047089">
    <property type="entry name" value="Asp-tRNA-ligase_1_N"/>
</dbReference>
<dbReference type="InterPro" id="IPR002312">
    <property type="entry name" value="Asp/Asn-tRNA-synth_IIb"/>
</dbReference>
<dbReference type="InterPro" id="IPR047090">
    <property type="entry name" value="AspRS_core"/>
</dbReference>
<dbReference type="InterPro" id="IPR004115">
    <property type="entry name" value="GAD-like_sf"/>
</dbReference>
<dbReference type="InterPro" id="IPR029351">
    <property type="entry name" value="GAD_dom"/>
</dbReference>
<dbReference type="InterPro" id="IPR012340">
    <property type="entry name" value="NA-bd_OB-fold"/>
</dbReference>
<dbReference type="InterPro" id="IPR004365">
    <property type="entry name" value="NA-bd_OB_tRNA"/>
</dbReference>
<dbReference type="NCBIfam" id="TIGR00459">
    <property type="entry name" value="aspS_bact"/>
    <property type="match status" value="1"/>
</dbReference>
<dbReference type="NCBIfam" id="NF001750">
    <property type="entry name" value="PRK00476.1"/>
    <property type="match status" value="1"/>
</dbReference>
<dbReference type="PANTHER" id="PTHR22594:SF5">
    <property type="entry name" value="ASPARTATE--TRNA LIGASE, MITOCHONDRIAL"/>
    <property type="match status" value="1"/>
</dbReference>
<dbReference type="PANTHER" id="PTHR22594">
    <property type="entry name" value="ASPARTYL/LYSYL-TRNA SYNTHETASE"/>
    <property type="match status" value="1"/>
</dbReference>
<dbReference type="Pfam" id="PF02938">
    <property type="entry name" value="GAD"/>
    <property type="match status" value="1"/>
</dbReference>
<dbReference type="Pfam" id="PF00152">
    <property type="entry name" value="tRNA-synt_2"/>
    <property type="match status" value="1"/>
</dbReference>
<dbReference type="Pfam" id="PF01336">
    <property type="entry name" value="tRNA_anti-codon"/>
    <property type="match status" value="1"/>
</dbReference>
<dbReference type="PRINTS" id="PR01042">
    <property type="entry name" value="TRNASYNTHASP"/>
</dbReference>
<dbReference type="SUPFAM" id="SSF55681">
    <property type="entry name" value="Class II aaRS and biotin synthetases"/>
    <property type="match status" value="1"/>
</dbReference>
<dbReference type="SUPFAM" id="SSF55261">
    <property type="entry name" value="GAD domain-like"/>
    <property type="match status" value="1"/>
</dbReference>
<dbReference type="SUPFAM" id="SSF50249">
    <property type="entry name" value="Nucleic acid-binding proteins"/>
    <property type="match status" value="1"/>
</dbReference>
<dbReference type="PROSITE" id="PS50862">
    <property type="entry name" value="AA_TRNA_LIGASE_II"/>
    <property type="match status" value="1"/>
</dbReference>
<feature type="chain" id="PRO_0000110931" description="Aspartate--tRNA(Asp/Asn) ligase">
    <location>
        <begin position="1"/>
        <end position="591"/>
    </location>
</feature>
<feature type="region of interest" description="Aspartate" evidence="1">
    <location>
        <begin position="199"/>
        <end position="202"/>
    </location>
</feature>
<feature type="binding site" evidence="1">
    <location>
        <position position="175"/>
    </location>
    <ligand>
        <name>L-aspartate</name>
        <dbReference type="ChEBI" id="CHEBI:29991"/>
    </ligand>
</feature>
<feature type="binding site" evidence="1">
    <location>
        <begin position="221"/>
        <end position="223"/>
    </location>
    <ligand>
        <name>ATP</name>
        <dbReference type="ChEBI" id="CHEBI:30616"/>
    </ligand>
</feature>
<feature type="binding site" evidence="1">
    <location>
        <position position="221"/>
    </location>
    <ligand>
        <name>L-aspartate</name>
        <dbReference type="ChEBI" id="CHEBI:29991"/>
    </ligand>
</feature>
<feature type="binding site" evidence="1">
    <location>
        <position position="450"/>
    </location>
    <ligand>
        <name>L-aspartate</name>
        <dbReference type="ChEBI" id="CHEBI:29991"/>
    </ligand>
</feature>
<feature type="binding site" evidence="1">
    <location>
        <position position="484"/>
    </location>
    <ligand>
        <name>ATP</name>
        <dbReference type="ChEBI" id="CHEBI:30616"/>
    </ligand>
</feature>
<feature type="binding site" evidence="1">
    <location>
        <position position="491"/>
    </location>
    <ligand>
        <name>L-aspartate</name>
        <dbReference type="ChEBI" id="CHEBI:29991"/>
    </ligand>
</feature>
<feature type="binding site" evidence="1">
    <location>
        <begin position="536"/>
        <end position="539"/>
    </location>
    <ligand>
        <name>ATP</name>
        <dbReference type="ChEBI" id="CHEBI:30616"/>
    </ligand>
</feature>
<feature type="site" description="Important for tRNA non-discrimination" evidence="1">
    <location>
        <position position="33"/>
    </location>
</feature>
<feature type="site" description="Important for tRNA non-discrimination" evidence="1">
    <location>
        <position position="83"/>
    </location>
</feature>
<protein>
    <recommendedName>
        <fullName evidence="1">Aspartate--tRNA(Asp/Asn) ligase</fullName>
        <ecNumber evidence="1">6.1.1.23</ecNumber>
    </recommendedName>
    <alternativeName>
        <fullName evidence="1">Aspartyl-tRNA synthetase</fullName>
        <shortName evidence="1">AspRS</shortName>
    </alternativeName>
    <alternativeName>
        <fullName evidence="1">Non-discriminating aspartyl-tRNA synthetase</fullName>
        <shortName evidence="1">ND-AspRS</shortName>
    </alternativeName>
</protein>
<accession>Q6N5D6</accession>
<sequence length="591" mass="66654">MHRYRTHTCGALRDSHIDQTVRLSGWCHRIRDHGGVLFIDLRDHYGLTQCVADPDSPAFKDAEKLRAEWVVRIDGKVRRRPEGTDNPDLPTGAVEVFVTEIEVLGPAGELPLPVFGEQEYPEDVRLRYRFLDLRREKLHQNIMTRGAIVDSMRRRMKEQGFFEFQTPILTASSPEGARDFLVPSRIHPGKFYALPQAPQQYKQLLMMSGFDRYFQIAPCFRDEDPRADRLPGEFYQLDVEMSFVTQDDIFAAMEPVITGVFEEFAKGKRVTKGWPRIAFADSMRKYGTDKPDLRNPIEMQDVSEHFRGSGFKVFARMLEEQRNQVWAIPGPGGGSRAFCDRMNSWAQGEGQPGLGYIMWREGGEGAGPLANNIGPERTEAIRAALGLKAGDAAFFVAGDPSKFVKFAGLARTKVGEELNLIDKDQFALAWVVDFPMYEYNEDDKKVDFSHNPFSMPQGGMEALTSQDPLTIKAFQYDITCNGYEIASGGIRNHRPEAMVKAFEIAGYGEQEVVDRFGGMYRAFQYGAPPHGGMAAGVDRIVMLLCGTTNLREISLFPMNQRAEDLLMGAPSEVSPKQLRELHIRLNLPDTK</sequence>